<organism>
    <name type="scientific">Kluyveromyces lactis (strain ATCC 8585 / CBS 2359 / DSM 70799 / NBRC 1267 / NRRL Y-1140 / WM37)</name>
    <name type="common">Yeast</name>
    <name type="synonym">Candida sphaerica</name>
    <dbReference type="NCBI Taxonomy" id="284590"/>
    <lineage>
        <taxon>Eukaryota</taxon>
        <taxon>Fungi</taxon>
        <taxon>Dikarya</taxon>
        <taxon>Ascomycota</taxon>
        <taxon>Saccharomycotina</taxon>
        <taxon>Saccharomycetes</taxon>
        <taxon>Saccharomycetales</taxon>
        <taxon>Saccharomycetaceae</taxon>
        <taxon>Kluyveromyces</taxon>
    </lineage>
</organism>
<proteinExistence type="inferred from homology"/>
<accession>Q6CXA6</accession>
<feature type="chain" id="PRO_0000330273" description="rRNA-processing protein EFG1">
    <location>
        <begin position="1"/>
        <end position="228"/>
    </location>
</feature>
<feature type="region of interest" description="Disordered" evidence="3">
    <location>
        <begin position="197"/>
        <end position="228"/>
    </location>
</feature>
<feature type="coiled-coil region" evidence="2">
    <location>
        <begin position="26"/>
        <end position="74"/>
    </location>
</feature>
<feature type="compositionally biased region" description="Acidic residues" evidence="3">
    <location>
        <begin position="203"/>
        <end position="212"/>
    </location>
</feature>
<feature type="compositionally biased region" description="Acidic residues" evidence="3">
    <location>
        <begin position="219"/>
        <end position="228"/>
    </location>
</feature>
<comment type="function">
    <text evidence="1">Involved in rRNA processing.</text>
</comment>
<comment type="subcellular location">
    <subcellularLocation>
        <location evidence="1">Nucleus</location>
        <location evidence="1">Nucleolus</location>
    </subcellularLocation>
</comment>
<comment type="similarity">
    <text evidence="4">Belongs to the EFG1 family.</text>
</comment>
<name>EFG1P_KLULA</name>
<keyword id="KW-0175">Coiled coil</keyword>
<keyword id="KW-0539">Nucleus</keyword>
<keyword id="KW-1185">Reference proteome</keyword>
<keyword id="KW-0698">rRNA processing</keyword>
<evidence type="ECO:0000250" key="1"/>
<evidence type="ECO:0000255" key="2"/>
<evidence type="ECO:0000256" key="3">
    <source>
        <dbReference type="SAM" id="MobiDB-lite"/>
    </source>
</evidence>
<evidence type="ECO:0000305" key="4"/>
<dbReference type="EMBL" id="CR382121">
    <property type="protein sequence ID" value="CAH03021.1"/>
    <property type="molecule type" value="Genomic_DNA"/>
</dbReference>
<dbReference type="RefSeq" id="XP_451433.1">
    <property type="nucleotide sequence ID" value="XM_451433.1"/>
</dbReference>
<dbReference type="SMR" id="Q6CXA6"/>
<dbReference type="FunCoup" id="Q6CXA6">
    <property type="interactions" value="191"/>
</dbReference>
<dbReference type="STRING" id="284590.Q6CXA6"/>
<dbReference type="PaxDb" id="284590-Q6CXA6"/>
<dbReference type="KEGG" id="kla:KLLA0_A09911g"/>
<dbReference type="eggNOG" id="KOG4484">
    <property type="taxonomic scope" value="Eukaryota"/>
</dbReference>
<dbReference type="HOGENOM" id="CLU_066912_2_0_1"/>
<dbReference type="InParanoid" id="Q6CXA6"/>
<dbReference type="OMA" id="KPHRIQE"/>
<dbReference type="Proteomes" id="UP000000598">
    <property type="component" value="Chromosome A"/>
</dbReference>
<dbReference type="GO" id="GO:0005730">
    <property type="term" value="C:nucleolus"/>
    <property type="evidence" value="ECO:0007669"/>
    <property type="project" value="UniProtKB-SubCell"/>
</dbReference>
<dbReference type="GO" id="GO:0030688">
    <property type="term" value="C:preribosome, small subunit precursor"/>
    <property type="evidence" value="ECO:0007669"/>
    <property type="project" value="TreeGrafter"/>
</dbReference>
<dbReference type="GO" id="GO:0000462">
    <property type="term" value="P:maturation of SSU-rRNA from tricistronic rRNA transcript (SSU-rRNA, 5.8S rRNA, LSU-rRNA)"/>
    <property type="evidence" value="ECO:0007669"/>
    <property type="project" value="TreeGrafter"/>
</dbReference>
<dbReference type="InterPro" id="IPR019310">
    <property type="entry name" value="Efg1"/>
</dbReference>
<dbReference type="InterPro" id="IPR050786">
    <property type="entry name" value="EFG1_rRNA-proc"/>
</dbReference>
<dbReference type="PANTHER" id="PTHR33911">
    <property type="entry name" value="RRNA-PROCESSING PROTEIN EFG1"/>
    <property type="match status" value="1"/>
</dbReference>
<dbReference type="PANTHER" id="PTHR33911:SF1">
    <property type="entry name" value="RRNA-PROCESSING PROTEIN EFG1"/>
    <property type="match status" value="1"/>
</dbReference>
<dbReference type="Pfam" id="PF10153">
    <property type="entry name" value="Efg1"/>
    <property type="match status" value="1"/>
</dbReference>
<sequence length="228" mass="26511">MSGKSKRPRQRHDSSLQLASVIGAGANKIKKQIRNVERLLQKRRDVLPDTVIVEKERMLEGLKFELKEAELRQVGRKNAKKYHMVRFFERKKALRRYKQASKKVIADPENKRFQNELRDCTIDLCYVVNFPRLSKYIALYPTGSSDAKELSEEVKKGLDSTDAKRTEFRNLVAKQLDEGTLPVSLSQILEGKRLNKDSTGVMLEEEQVEEEATEKQFNDEEEEDDFFE</sequence>
<gene>
    <name type="primary">EFG1</name>
    <name type="ordered locus">KLLA0A09911g</name>
</gene>
<reference key="1">
    <citation type="journal article" date="2004" name="Nature">
        <title>Genome evolution in yeasts.</title>
        <authorList>
            <person name="Dujon B."/>
            <person name="Sherman D."/>
            <person name="Fischer G."/>
            <person name="Durrens P."/>
            <person name="Casaregola S."/>
            <person name="Lafontaine I."/>
            <person name="de Montigny J."/>
            <person name="Marck C."/>
            <person name="Neuveglise C."/>
            <person name="Talla E."/>
            <person name="Goffard N."/>
            <person name="Frangeul L."/>
            <person name="Aigle M."/>
            <person name="Anthouard V."/>
            <person name="Babour A."/>
            <person name="Barbe V."/>
            <person name="Barnay S."/>
            <person name="Blanchin S."/>
            <person name="Beckerich J.-M."/>
            <person name="Beyne E."/>
            <person name="Bleykasten C."/>
            <person name="Boisrame A."/>
            <person name="Boyer J."/>
            <person name="Cattolico L."/>
            <person name="Confanioleri F."/>
            <person name="de Daruvar A."/>
            <person name="Despons L."/>
            <person name="Fabre E."/>
            <person name="Fairhead C."/>
            <person name="Ferry-Dumazet H."/>
            <person name="Groppi A."/>
            <person name="Hantraye F."/>
            <person name="Hennequin C."/>
            <person name="Jauniaux N."/>
            <person name="Joyet P."/>
            <person name="Kachouri R."/>
            <person name="Kerrest A."/>
            <person name="Koszul R."/>
            <person name="Lemaire M."/>
            <person name="Lesur I."/>
            <person name="Ma L."/>
            <person name="Muller H."/>
            <person name="Nicaud J.-M."/>
            <person name="Nikolski M."/>
            <person name="Oztas S."/>
            <person name="Ozier-Kalogeropoulos O."/>
            <person name="Pellenz S."/>
            <person name="Potier S."/>
            <person name="Richard G.-F."/>
            <person name="Straub M.-L."/>
            <person name="Suleau A."/>
            <person name="Swennen D."/>
            <person name="Tekaia F."/>
            <person name="Wesolowski-Louvel M."/>
            <person name="Westhof E."/>
            <person name="Wirth B."/>
            <person name="Zeniou-Meyer M."/>
            <person name="Zivanovic Y."/>
            <person name="Bolotin-Fukuhara M."/>
            <person name="Thierry A."/>
            <person name="Bouchier C."/>
            <person name="Caudron B."/>
            <person name="Scarpelli C."/>
            <person name="Gaillardin C."/>
            <person name="Weissenbach J."/>
            <person name="Wincker P."/>
            <person name="Souciet J.-L."/>
        </authorList>
    </citation>
    <scope>NUCLEOTIDE SEQUENCE [LARGE SCALE GENOMIC DNA]</scope>
    <source>
        <strain>ATCC 8585 / CBS 2359 / DSM 70799 / NBRC 1267 / NRRL Y-1140 / WM37</strain>
    </source>
</reference>
<protein>
    <recommendedName>
        <fullName>rRNA-processing protein EFG1</fullName>
    </recommendedName>
</protein>